<reference key="1">
    <citation type="submission" date="2008-10" db="EMBL/GenBank/DDBJ databases">
        <title>Complete sequence of Desulfovibrio vulgaris str. 'Miyazaki F'.</title>
        <authorList>
            <person name="Lucas S."/>
            <person name="Copeland A."/>
            <person name="Lapidus A."/>
            <person name="Glavina del Rio T."/>
            <person name="Dalin E."/>
            <person name="Tice H."/>
            <person name="Bruce D."/>
            <person name="Goodwin L."/>
            <person name="Pitluck S."/>
            <person name="Sims D."/>
            <person name="Brettin T."/>
            <person name="Detter J.C."/>
            <person name="Han C."/>
            <person name="Larimer F."/>
            <person name="Land M."/>
            <person name="Hauser L."/>
            <person name="Kyrpides N."/>
            <person name="Mikhailova N."/>
            <person name="Hazen T.C."/>
            <person name="Richardson P."/>
        </authorList>
    </citation>
    <scope>NUCLEOTIDE SEQUENCE [LARGE SCALE GENOMIC DNA]</scope>
    <source>
        <strain>DSM 19637 / Miyazaki F</strain>
    </source>
</reference>
<feature type="chain" id="PRO_0000383238" description="Nucleotide-binding protein DvMF_0424">
    <location>
        <begin position="1"/>
        <end position="293"/>
    </location>
</feature>
<feature type="binding site" evidence="1">
    <location>
        <begin position="13"/>
        <end position="20"/>
    </location>
    <ligand>
        <name>ATP</name>
        <dbReference type="ChEBI" id="CHEBI:30616"/>
    </ligand>
</feature>
<feature type="binding site" evidence="1">
    <location>
        <begin position="65"/>
        <end position="68"/>
    </location>
    <ligand>
        <name>GTP</name>
        <dbReference type="ChEBI" id="CHEBI:37565"/>
    </ligand>
</feature>
<sequence>MAAADFPVIIVTGLSGAGKSTVLNVLEDLRYFTVDGLPASLAPQMVTILNREALSHYQGLVLGMDLRESNFVRNLEKSLERLQGMGVRPAVVFIEATPAVLNRRYATTRRPHPLESEGMGLEQALEQERLRLAPVRETADLVVDTSSYSIHDLRRVIQKKWSSIQGRIRSLRINIVTFGFKYGVPADADLVFDLRFLPNPYFVPDLRPLSGLDEPVAKYVLEAGHGETFLAKLLDFLHFLLPQYEAEGRYRLTIAIGCTGGRHRSVSVAEALLRALKKSDYAVSIEHRHMELG</sequence>
<protein>
    <recommendedName>
        <fullName evidence="1">Nucleotide-binding protein DvMF_0424</fullName>
    </recommendedName>
</protein>
<keyword id="KW-0067">ATP-binding</keyword>
<keyword id="KW-0342">GTP-binding</keyword>
<keyword id="KW-0547">Nucleotide-binding</keyword>
<proteinExistence type="inferred from homology"/>
<gene>
    <name type="ordered locus">DvMF_0424</name>
</gene>
<organism>
    <name type="scientific">Nitratidesulfovibrio vulgaris (strain DSM 19637 / Miyazaki F)</name>
    <name type="common">Desulfovibrio vulgaris</name>
    <dbReference type="NCBI Taxonomy" id="883"/>
    <lineage>
        <taxon>Bacteria</taxon>
        <taxon>Pseudomonadati</taxon>
        <taxon>Thermodesulfobacteriota</taxon>
        <taxon>Desulfovibrionia</taxon>
        <taxon>Desulfovibrionales</taxon>
        <taxon>Desulfovibrionaceae</taxon>
        <taxon>Nitratidesulfovibrio</taxon>
    </lineage>
</organism>
<dbReference type="EMBL" id="CP001197">
    <property type="protein sequence ID" value="ACL07381.1"/>
    <property type="molecule type" value="Genomic_DNA"/>
</dbReference>
<dbReference type="SMR" id="B8DJQ9"/>
<dbReference type="STRING" id="883.DvMF_0424"/>
<dbReference type="KEGG" id="dvm:DvMF_0424"/>
<dbReference type="eggNOG" id="COG1660">
    <property type="taxonomic scope" value="Bacteria"/>
</dbReference>
<dbReference type="HOGENOM" id="CLU_059558_0_0_7"/>
<dbReference type="OrthoDB" id="9784461at2"/>
<dbReference type="GO" id="GO:0005524">
    <property type="term" value="F:ATP binding"/>
    <property type="evidence" value="ECO:0007669"/>
    <property type="project" value="UniProtKB-UniRule"/>
</dbReference>
<dbReference type="GO" id="GO:0005525">
    <property type="term" value="F:GTP binding"/>
    <property type="evidence" value="ECO:0007669"/>
    <property type="project" value="UniProtKB-UniRule"/>
</dbReference>
<dbReference type="Gene3D" id="3.40.50.300">
    <property type="entry name" value="P-loop containing nucleotide triphosphate hydrolases"/>
    <property type="match status" value="1"/>
</dbReference>
<dbReference type="HAMAP" id="MF_00636">
    <property type="entry name" value="RapZ_like"/>
    <property type="match status" value="1"/>
</dbReference>
<dbReference type="InterPro" id="IPR027417">
    <property type="entry name" value="P-loop_NTPase"/>
</dbReference>
<dbReference type="InterPro" id="IPR005337">
    <property type="entry name" value="RapZ-like"/>
</dbReference>
<dbReference type="InterPro" id="IPR053930">
    <property type="entry name" value="RapZ-like_N"/>
</dbReference>
<dbReference type="InterPro" id="IPR053931">
    <property type="entry name" value="RapZ_C"/>
</dbReference>
<dbReference type="NCBIfam" id="NF003828">
    <property type="entry name" value="PRK05416.1"/>
    <property type="match status" value="1"/>
</dbReference>
<dbReference type="PANTHER" id="PTHR30448">
    <property type="entry name" value="RNASE ADAPTER PROTEIN RAPZ"/>
    <property type="match status" value="1"/>
</dbReference>
<dbReference type="PANTHER" id="PTHR30448:SF0">
    <property type="entry name" value="RNASE ADAPTER PROTEIN RAPZ"/>
    <property type="match status" value="1"/>
</dbReference>
<dbReference type="Pfam" id="PF22740">
    <property type="entry name" value="PapZ_C"/>
    <property type="match status" value="1"/>
</dbReference>
<dbReference type="Pfam" id="PF03668">
    <property type="entry name" value="RapZ-like_N"/>
    <property type="match status" value="1"/>
</dbReference>
<dbReference type="PIRSF" id="PIRSF005052">
    <property type="entry name" value="P-loopkin"/>
    <property type="match status" value="1"/>
</dbReference>
<dbReference type="SUPFAM" id="SSF52540">
    <property type="entry name" value="P-loop containing nucleoside triphosphate hydrolases"/>
    <property type="match status" value="1"/>
</dbReference>
<accession>B8DJQ9</accession>
<name>Y424_NITV9</name>
<evidence type="ECO:0000255" key="1">
    <source>
        <dbReference type="HAMAP-Rule" id="MF_00636"/>
    </source>
</evidence>
<comment type="function">
    <text evidence="1">Displays ATPase and GTPase activities.</text>
</comment>
<comment type="similarity">
    <text evidence="1">Belongs to the RapZ-like family.</text>
</comment>